<dbReference type="EC" id="2.4.1.182" evidence="1"/>
<dbReference type="EMBL" id="CP000057">
    <property type="protein sequence ID" value="AAX88071.1"/>
    <property type="molecule type" value="Genomic_DNA"/>
</dbReference>
<dbReference type="RefSeq" id="WP_011272365.1">
    <property type="nucleotide sequence ID" value="NC_007146.2"/>
</dbReference>
<dbReference type="SMR" id="Q4QLM6"/>
<dbReference type="CAZy" id="GT19">
    <property type="family name" value="Glycosyltransferase Family 19"/>
</dbReference>
<dbReference type="GeneID" id="93220072"/>
<dbReference type="KEGG" id="hit:NTHI1220"/>
<dbReference type="HOGENOM" id="CLU_036577_3_0_6"/>
<dbReference type="UniPathway" id="UPA00973"/>
<dbReference type="Proteomes" id="UP000002525">
    <property type="component" value="Chromosome"/>
</dbReference>
<dbReference type="GO" id="GO:0016020">
    <property type="term" value="C:membrane"/>
    <property type="evidence" value="ECO:0007669"/>
    <property type="project" value="GOC"/>
</dbReference>
<dbReference type="GO" id="GO:0008915">
    <property type="term" value="F:lipid-A-disaccharide synthase activity"/>
    <property type="evidence" value="ECO:0007669"/>
    <property type="project" value="UniProtKB-UniRule"/>
</dbReference>
<dbReference type="GO" id="GO:0005543">
    <property type="term" value="F:phospholipid binding"/>
    <property type="evidence" value="ECO:0007669"/>
    <property type="project" value="TreeGrafter"/>
</dbReference>
<dbReference type="GO" id="GO:0009245">
    <property type="term" value="P:lipid A biosynthetic process"/>
    <property type="evidence" value="ECO:0007669"/>
    <property type="project" value="UniProtKB-UniRule"/>
</dbReference>
<dbReference type="HAMAP" id="MF_00392">
    <property type="entry name" value="LpxB"/>
    <property type="match status" value="1"/>
</dbReference>
<dbReference type="InterPro" id="IPR003835">
    <property type="entry name" value="Glyco_trans_19"/>
</dbReference>
<dbReference type="NCBIfam" id="TIGR00215">
    <property type="entry name" value="lpxB"/>
    <property type="match status" value="1"/>
</dbReference>
<dbReference type="PANTHER" id="PTHR30372">
    <property type="entry name" value="LIPID-A-DISACCHARIDE SYNTHASE"/>
    <property type="match status" value="1"/>
</dbReference>
<dbReference type="PANTHER" id="PTHR30372:SF4">
    <property type="entry name" value="LIPID-A-DISACCHARIDE SYNTHASE, MITOCHONDRIAL-RELATED"/>
    <property type="match status" value="1"/>
</dbReference>
<dbReference type="Pfam" id="PF02684">
    <property type="entry name" value="LpxB"/>
    <property type="match status" value="1"/>
</dbReference>
<dbReference type="SUPFAM" id="SSF53756">
    <property type="entry name" value="UDP-Glycosyltransferase/glycogen phosphorylase"/>
    <property type="match status" value="1"/>
</dbReference>
<keyword id="KW-0328">Glycosyltransferase</keyword>
<keyword id="KW-0441">Lipid A biosynthesis</keyword>
<keyword id="KW-0444">Lipid biosynthesis</keyword>
<keyword id="KW-0443">Lipid metabolism</keyword>
<keyword id="KW-0808">Transferase</keyword>
<accession>Q4QLM6</accession>
<sequence length="390" mass="43569">MNKTNPTIALVAGEVSGDILGAGLIRQLKAHYPNARFIGIAGTRMLAEGCKTLVDMEELSVMGLAEILKHLPRLLKIRKNVIQTMLQEKPDVYIGIDAPDFNLDVELKLKANGIKTIHYVSPSVWAWRQNRIHKIAKATHQVLAFLPFEKAFYDKFNVPCRFIGHTMADAIPLKPNRAEACQMLQIDPAQRYLAILVGSRGSEVEFLAEPFLKTALLLKEQFPDLQFLVPLVNEKRRIQFEAIKAKIAPNLDLHLIDGNARQAMIAADATLLASGTAALEAMLCKSPMVVGYRMKPLTYFLAKRLVKTDYISLPNLLANEMLVPEMIQEECTPELLAEKLSAYLSDDESAVKNRHILIQHFTDLHQKIQCNADKQAAQAVIDLLEGTENV</sequence>
<name>LPXB_HAEI8</name>
<organism>
    <name type="scientific">Haemophilus influenzae (strain 86-028NP)</name>
    <dbReference type="NCBI Taxonomy" id="281310"/>
    <lineage>
        <taxon>Bacteria</taxon>
        <taxon>Pseudomonadati</taxon>
        <taxon>Pseudomonadota</taxon>
        <taxon>Gammaproteobacteria</taxon>
        <taxon>Pasteurellales</taxon>
        <taxon>Pasteurellaceae</taxon>
        <taxon>Haemophilus</taxon>
    </lineage>
</organism>
<proteinExistence type="inferred from homology"/>
<feature type="chain" id="PRO_0000255186" description="Lipid-A-disaccharide synthase">
    <location>
        <begin position="1"/>
        <end position="390"/>
    </location>
</feature>
<evidence type="ECO:0000255" key="1">
    <source>
        <dbReference type="HAMAP-Rule" id="MF_00392"/>
    </source>
</evidence>
<comment type="function">
    <text evidence="1">Condensation of UDP-2,3-diacylglucosamine and 2,3-diacylglucosamine-1-phosphate to form lipid A disaccharide, a precursor of lipid A, a phosphorylated glycolipid that anchors the lipopolysaccharide to the outer membrane of the cell.</text>
</comment>
<comment type="catalytic activity">
    <reaction evidence="1">
        <text>a lipid X + a UDP-2-N,3-O-bis[(3R)-3-hydroxyacyl]-alpha-D-glucosamine = a lipid A disaccharide + UDP + H(+)</text>
        <dbReference type="Rhea" id="RHEA:67828"/>
        <dbReference type="ChEBI" id="CHEBI:15378"/>
        <dbReference type="ChEBI" id="CHEBI:58223"/>
        <dbReference type="ChEBI" id="CHEBI:137748"/>
        <dbReference type="ChEBI" id="CHEBI:176338"/>
        <dbReference type="ChEBI" id="CHEBI:176343"/>
        <dbReference type="EC" id="2.4.1.182"/>
    </reaction>
</comment>
<comment type="pathway">
    <text evidence="1">Bacterial outer membrane biogenesis; LPS lipid A biosynthesis.</text>
</comment>
<comment type="similarity">
    <text evidence="1">Belongs to the LpxB family.</text>
</comment>
<gene>
    <name evidence="1" type="primary">lpxB</name>
    <name type="ordered locus">NTHI1220</name>
</gene>
<protein>
    <recommendedName>
        <fullName evidence="1">Lipid-A-disaccharide synthase</fullName>
        <ecNumber evidence="1">2.4.1.182</ecNumber>
    </recommendedName>
</protein>
<reference key="1">
    <citation type="journal article" date="2005" name="J. Bacteriol.">
        <title>Genomic sequence of an otitis media isolate of nontypeable Haemophilus influenzae: comparative study with H. influenzae serotype d, strain KW20.</title>
        <authorList>
            <person name="Harrison A."/>
            <person name="Dyer D.W."/>
            <person name="Gillaspy A."/>
            <person name="Ray W.C."/>
            <person name="Mungur R."/>
            <person name="Carson M.B."/>
            <person name="Zhong H."/>
            <person name="Gipson J."/>
            <person name="Gipson M."/>
            <person name="Johnson L.S."/>
            <person name="Lewis L."/>
            <person name="Bakaletz L.O."/>
            <person name="Munson R.S. Jr."/>
        </authorList>
    </citation>
    <scope>NUCLEOTIDE SEQUENCE [LARGE SCALE GENOMIC DNA]</scope>
    <source>
        <strain>86-028NP</strain>
    </source>
</reference>